<feature type="chain" id="PRO_0000332678" description="Ribonuclease H">
    <location>
        <begin position="1"/>
        <end position="146"/>
    </location>
</feature>
<feature type="domain" description="RNase H type-1" evidence="2">
    <location>
        <begin position="1"/>
        <end position="141"/>
    </location>
</feature>
<feature type="binding site" evidence="1">
    <location>
        <position position="9"/>
    </location>
    <ligand>
        <name>Mg(2+)</name>
        <dbReference type="ChEBI" id="CHEBI:18420"/>
        <label>1</label>
    </ligand>
</feature>
<feature type="binding site" evidence="1">
    <location>
        <position position="9"/>
    </location>
    <ligand>
        <name>Mg(2+)</name>
        <dbReference type="ChEBI" id="CHEBI:18420"/>
        <label>2</label>
    </ligand>
</feature>
<feature type="binding site" evidence="1">
    <location>
        <position position="47"/>
    </location>
    <ligand>
        <name>Mg(2+)</name>
        <dbReference type="ChEBI" id="CHEBI:18420"/>
        <label>1</label>
    </ligand>
</feature>
<feature type="binding site" evidence="1">
    <location>
        <position position="69"/>
    </location>
    <ligand>
        <name>Mg(2+)</name>
        <dbReference type="ChEBI" id="CHEBI:18420"/>
        <label>1</label>
    </ligand>
</feature>
<feature type="binding site" evidence="1">
    <location>
        <position position="133"/>
    </location>
    <ligand>
        <name>Mg(2+)</name>
        <dbReference type="ChEBI" id="CHEBI:18420"/>
        <label>2</label>
    </ligand>
</feature>
<accession>Q01RW8</accession>
<gene>
    <name evidence="1" type="primary">rnhA</name>
    <name type="ordered locus">Acid_6680</name>
</gene>
<reference key="1">
    <citation type="journal article" date="2009" name="Appl. Environ. Microbiol.">
        <title>Three genomes from the phylum Acidobacteria provide insight into the lifestyles of these microorganisms in soils.</title>
        <authorList>
            <person name="Ward N.L."/>
            <person name="Challacombe J.F."/>
            <person name="Janssen P.H."/>
            <person name="Henrissat B."/>
            <person name="Coutinho P.M."/>
            <person name="Wu M."/>
            <person name="Xie G."/>
            <person name="Haft D.H."/>
            <person name="Sait M."/>
            <person name="Badger J."/>
            <person name="Barabote R.D."/>
            <person name="Bradley B."/>
            <person name="Brettin T.S."/>
            <person name="Brinkac L.M."/>
            <person name="Bruce D."/>
            <person name="Creasy T."/>
            <person name="Daugherty S.C."/>
            <person name="Davidsen T.M."/>
            <person name="DeBoy R.T."/>
            <person name="Detter J.C."/>
            <person name="Dodson R.J."/>
            <person name="Durkin A.S."/>
            <person name="Ganapathy A."/>
            <person name="Gwinn-Giglio M."/>
            <person name="Han C.S."/>
            <person name="Khouri H."/>
            <person name="Kiss H."/>
            <person name="Kothari S.P."/>
            <person name="Madupu R."/>
            <person name="Nelson K.E."/>
            <person name="Nelson W.C."/>
            <person name="Paulsen I."/>
            <person name="Penn K."/>
            <person name="Ren Q."/>
            <person name="Rosovitz M.J."/>
            <person name="Selengut J.D."/>
            <person name="Shrivastava S."/>
            <person name="Sullivan S.A."/>
            <person name="Tapia R."/>
            <person name="Thompson L.S."/>
            <person name="Watkins K.L."/>
            <person name="Yang Q."/>
            <person name="Yu C."/>
            <person name="Zafar N."/>
            <person name="Zhou L."/>
            <person name="Kuske C.R."/>
        </authorList>
    </citation>
    <scope>NUCLEOTIDE SEQUENCE [LARGE SCALE GENOMIC DNA]</scope>
    <source>
        <strain>Ellin6076</strain>
    </source>
</reference>
<keyword id="KW-0963">Cytoplasm</keyword>
<keyword id="KW-0255">Endonuclease</keyword>
<keyword id="KW-0378">Hydrolase</keyword>
<keyword id="KW-0460">Magnesium</keyword>
<keyword id="KW-0479">Metal-binding</keyword>
<keyword id="KW-0540">Nuclease</keyword>
<comment type="function">
    <text evidence="1">Endonuclease that specifically degrades the RNA of RNA-DNA hybrids.</text>
</comment>
<comment type="catalytic activity">
    <reaction evidence="1">
        <text>Endonucleolytic cleavage to 5'-phosphomonoester.</text>
        <dbReference type="EC" id="3.1.26.4"/>
    </reaction>
</comment>
<comment type="cofactor">
    <cofactor evidence="1">
        <name>Mg(2+)</name>
        <dbReference type="ChEBI" id="CHEBI:18420"/>
    </cofactor>
    <text evidence="1">Binds 1 Mg(2+) ion per subunit. May bind a second metal ion at a regulatory site, or after substrate binding.</text>
</comment>
<comment type="subunit">
    <text evidence="1">Monomer.</text>
</comment>
<comment type="subcellular location">
    <subcellularLocation>
        <location evidence="1">Cytoplasm</location>
    </subcellularLocation>
</comment>
<comment type="similarity">
    <text evidence="1">Belongs to the RNase H family.</text>
</comment>
<proteinExistence type="inferred from homology"/>
<organism>
    <name type="scientific">Solibacter usitatus (strain Ellin6076)</name>
    <dbReference type="NCBI Taxonomy" id="234267"/>
    <lineage>
        <taxon>Bacteria</taxon>
        <taxon>Pseudomonadati</taxon>
        <taxon>Acidobacteriota</taxon>
        <taxon>Terriglobia</taxon>
        <taxon>Bryobacterales</taxon>
        <taxon>Solibacteraceae</taxon>
        <taxon>Candidatus Solibacter</taxon>
    </lineage>
</organism>
<evidence type="ECO:0000255" key="1">
    <source>
        <dbReference type="HAMAP-Rule" id="MF_00042"/>
    </source>
</evidence>
<evidence type="ECO:0000255" key="2">
    <source>
        <dbReference type="PROSITE-ProRule" id="PRU00408"/>
    </source>
</evidence>
<sequence length="146" mass="16637">MKKVQLITDGACLGNPGPGGWSAILRFEEQKKELWGCEKQTTNNRMELTAAIEGLRALREKCQVEVVTDSEYVLKGITTWIDGWKRKGWMTAAKKPVINQDLWKLLDEQVNRHQATWTWTKGHASHADNNRCDELATRAAREQSKS</sequence>
<dbReference type="EC" id="3.1.26.4" evidence="1"/>
<dbReference type="EMBL" id="CP000473">
    <property type="protein sequence ID" value="ABJ87602.1"/>
    <property type="molecule type" value="Genomic_DNA"/>
</dbReference>
<dbReference type="SMR" id="Q01RW8"/>
<dbReference type="FunCoup" id="Q01RW8">
    <property type="interactions" value="281"/>
</dbReference>
<dbReference type="STRING" id="234267.Acid_6680"/>
<dbReference type="KEGG" id="sus:Acid_6680"/>
<dbReference type="eggNOG" id="COG0328">
    <property type="taxonomic scope" value="Bacteria"/>
</dbReference>
<dbReference type="HOGENOM" id="CLU_030894_6_0_0"/>
<dbReference type="InParanoid" id="Q01RW8"/>
<dbReference type="OrthoDB" id="7845843at2"/>
<dbReference type="GO" id="GO:0005737">
    <property type="term" value="C:cytoplasm"/>
    <property type="evidence" value="ECO:0007669"/>
    <property type="project" value="UniProtKB-SubCell"/>
</dbReference>
<dbReference type="GO" id="GO:0000287">
    <property type="term" value="F:magnesium ion binding"/>
    <property type="evidence" value="ECO:0007669"/>
    <property type="project" value="UniProtKB-UniRule"/>
</dbReference>
<dbReference type="GO" id="GO:0003676">
    <property type="term" value="F:nucleic acid binding"/>
    <property type="evidence" value="ECO:0007669"/>
    <property type="project" value="InterPro"/>
</dbReference>
<dbReference type="GO" id="GO:0004523">
    <property type="term" value="F:RNA-DNA hybrid ribonuclease activity"/>
    <property type="evidence" value="ECO:0007669"/>
    <property type="project" value="UniProtKB-UniRule"/>
</dbReference>
<dbReference type="GO" id="GO:0043137">
    <property type="term" value="P:DNA replication, removal of RNA primer"/>
    <property type="evidence" value="ECO:0007669"/>
    <property type="project" value="TreeGrafter"/>
</dbReference>
<dbReference type="CDD" id="cd09278">
    <property type="entry name" value="RNase_HI_prokaryote_like"/>
    <property type="match status" value="1"/>
</dbReference>
<dbReference type="FunFam" id="3.30.420.10:FF:000089">
    <property type="entry name" value="Ribonuclease H"/>
    <property type="match status" value="1"/>
</dbReference>
<dbReference type="Gene3D" id="3.30.420.10">
    <property type="entry name" value="Ribonuclease H-like superfamily/Ribonuclease H"/>
    <property type="match status" value="1"/>
</dbReference>
<dbReference type="HAMAP" id="MF_00042">
    <property type="entry name" value="RNase_H"/>
    <property type="match status" value="1"/>
</dbReference>
<dbReference type="InterPro" id="IPR050092">
    <property type="entry name" value="RNase_H"/>
</dbReference>
<dbReference type="InterPro" id="IPR012337">
    <property type="entry name" value="RNaseH-like_sf"/>
</dbReference>
<dbReference type="InterPro" id="IPR002156">
    <property type="entry name" value="RNaseH_domain"/>
</dbReference>
<dbReference type="InterPro" id="IPR036397">
    <property type="entry name" value="RNaseH_sf"/>
</dbReference>
<dbReference type="InterPro" id="IPR022892">
    <property type="entry name" value="RNaseHI"/>
</dbReference>
<dbReference type="NCBIfam" id="NF001236">
    <property type="entry name" value="PRK00203.1"/>
    <property type="match status" value="1"/>
</dbReference>
<dbReference type="PANTHER" id="PTHR10642">
    <property type="entry name" value="RIBONUCLEASE H1"/>
    <property type="match status" value="1"/>
</dbReference>
<dbReference type="PANTHER" id="PTHR10642:SF26">
    <property type="entry name" value="RIBONUCLEASE H1"/>
    <property type="match status" value="1"/>
</dbReference>
<dbReference type="Pfam" id="PF00075">
    <property type="entry name" value="RNase_H"/>
    <property type="match status" value="1"/>
</dbReference>
<dbReference type="SUPFAM" id="SSF53098">
    <property type="entry name" value="Ribonuclease H-like"/>
    <property type="match status" value="1"/>
</dbReference>
<dbReference type="PROSITE" id="PS50879">
    <property type="entry name" value="RNASE_H_1"/>
    <property type="match status" value="1"/>
</dbReference>
<name>RNH_SOLUE</name>
<protein>
    <recommendedName>
        <fullName evidence="1">Ribonuclease H</fullName>
        <shortName evidence="1">RNase H</shortName>
        <ecNumber evidence="1">3.1.26.4</ecNumber>
    </recommendedName>
</protein>